<gene>
    <name evidence="1" type="primary">aroC</name>
    <name type="ordered locus">DSY2392</name>
</gene>
<dbReference type="EC" id="4.2.3.5" evidence="1"/>
<dbReference type="EMBL" id="AP008230">
    <property type="protein sequence ID" value="BAE84181.1"/>
    <property type="molecule type" value="Genomic_DNA"/>
</dbReference>
<dbReference type="RefSeq" id="WP_011460295.1">
    <property type="nucleotide sequence ID" value="NC_007907.1"/>
</dbReference>
<dbReference type="SMR" id="Q24UW1"/>
<dbReference type="STRING" id="138119.DSY2392"/>
<dbReference type="KEGG" id="dsy:DSY2392"/>
<dbReference type="eggNOG" id="COG0082">
    <property type="taxonomic scope" value="Bacteria"/>
</dbReference>
<dbReference type="HOGENOM" id="CLU_034547_2_0_9"/>
<dbReference type="UniPathway" id="UPA00053">
    <property type="reaction ID" value="UER00090"/>
</dbReference>
<dbReference type="Proteomes" id="UP000001946">
    <property type="component" value="Chromosome"/>
</dbReference>
<dbReference type="GO" id="GO:0005829">
    <property type="term" value="C:cytosol"/>
    <property type="evidence" value="ECO:0007669"/>
    <property type="project" value="TreeGrafter"/>
</dbReference>
<dbReference type="GO" id="GO:0004107">
    <property type="term" value="F:chorismate synthase activity"/>
    <property type="evidence" value="ECO:0007669"/>
    <property type="project" value="UniProtKB-UniRule"/>
</dbReference>
<dbReference type="GO" id="GO:0010181">
    <property type="term" value="F:FMN binding"/>
    <property type="evidence" value="ECO:0007669"/>
    <property type="project" value="TreeGrafter"/>
</dbReference>
<dbReference type="GO" id="GO:0008652">
    <property type="term" value="P:amino acid biosynthetic process"/>
    <property type="evidence" value="ECO:0007669"/>
    <property type="project" value="UniProtKB-KW"/>
</dbReference>
<dbReference type="GO" id="GO:0009073">
    <property type="term" value="P:aromatic amino acid family biosynthetic process"/>
    <property type="evidence" value="ECO:0007669"/>
    <property type="project" value="UniProtKB-KW"/>
</dbReference>
<dbReference type="GO" id="GO:0009423">
    <property type="term" value="P:chorismate biosynthetic process"/>
    <property type="evidence" value="ECO:0007669"/>
    <property type="project" value="UniProtKB-UniRule"/>
</dbReference>
<dbReference type="CDD" id="cd07304">
    <property type="entry name" value="Chorismate_synthase"/>
    <property type="match status" value="1"/>
</dbReference>
<dbReference type="FunFam" id="3.60.150.10:FF:000002">
    <property type="entry name" value="Chorismate synthase"/>
    <property type="match status" value="1"/>
</dbReference>
<dbReference type="Gene3D" id="3.60.150.10">
    <property type="entry name" value="Chorismate synthase AroC"/>
    <property type="match status" value="1"/>
</dbReference>
<dbReference type="HAMAP" id="MF_00300">
    <property type="entry name" value="Chorismate_synth"/>
    <property type="match status" value="1"/>
</dbReference>
<dbReference type="InterPro" id="IPR000453">
    <property type="entry name" value="Chorismate_synth"/>
</dbReference>
<dbReference type="InterPro" id="IPR035904">
    <property type="entry name" value="Chorismate_synth_AroC_sf"/>
</dbReference>
<dbReference type="InterPro" id="IPR020541">
    <property type="entry name" value="Chorismate_synthase_CS"/>
</dbReference>
<dbReference type="NCBIfam" id="TIGR00033">
    <property type="entry name" value="aroC"/>
    <property type="match status" value="1"/>
</dbReference>
<dbReference type="NCBIfam" id="NF003793">
    <property type="entry name" value="PRK05382.1"/>
    <property type="match status" value="1"/>
</dbReference>
<dbReference type="PANTHER" id="PTHR21085">
    <property type="entry name" value="CHORISMATE SYNTHASE"/>
    <property type="match status" value="1"/>
</dbReference>
<dbReference type="PANTHER" id="PTHR21085:SF0">
    <property type="entry name" value="CHORISMATE SYNTHASE"/>
    <property type="match status" value="1"/>
</dbReference>
<dbReference type="Pfam" id="PF01264">
    <property type="entry name" value="Chorismate_synt"/>
    <property type="match status" value="1"/>
</dbReference>
<dbReference type="PIRSF" id="PIRSF001456">
    <property type="entry name" value="Chorismate_synth"/>
    <property type="match status" value="1"/>
</dbReference>
<dbReference type="SUPFAM" id="SSF103263">
    <property type="entry name" value="Chorismate synthase, AroC"/>
    <property type="match status" value="1"/>
</dbReference>
<dbReference type="PROSITE" id="PS00787">
    <property type="entry name" value="CHORISMATE_SYNTHASE_1"/>
    <property type="match status" value="1"/>
</dbReference>
<feature type="chain" id="PRO_1000022482" description="Chorismate synthase">
    <location>
        <begin position="1"/>
        <end position="382"/>
    </location>
</feature>
<feature type="binding site" evidence="1">
    <location>
        <position position="39"/>
    </location>
    <ligand>
        <name>NADP(+)</name>
        <dbReference type="ChEBI" id="CHEBI:58349"/>
    </ligand>
</feature>
<feature type="binding site" evidence="1">
    <location>
        <position position="45"/>
    </location>
    <ligand>
        <name>NADP(+)</name>
        <dbReference type="ChEBI" id="CHEBI:58349"/>
    </ligand>
</feature>
<feature type="binding site" evidence="1">
    <location>
        <begin position="127"/>
        <end position="129"/>
    </location>
    <ligand>
        <name>FMN</name>
        <dbReference type="ChEBI" id="CHEBI:58210"/>
    </ligand>
</feature>
<feature type="binding site" evidence="1">
    <location>
        <begin position="245"/>
        <end position="246"/>
    </location>
    <ligand>
        <name>FMN</name>
        <dbReference type="ChEBI" id="CHEBI:58210"/>
    </ligand>
</feature>
<feature type="binding site" evidence="1">
    <location>
        <position position="290"/>
    </location>
    <ligand>
        <name>FMN</name>
        <dbReference type="ChEBI" id="CHEBI:58210"/>
    </ligand>
</feature>
<feature type="binding site" evidence="1">
    <location>
        <begin position="305"/>
        <end position="309"/>
    </location>
    <ligand>
        <name>FMN</name>
        <dbReference type="ChEBI" id="CHEBI:58210"/>
    </ligand>
</feature>
<feature type="binding site" evidence="1">
    <location>
        <position position="331"/>
    </location>
    <ligand>
        <name>FMN</name>
        <dbReference type="ChEBI" id="CHEBI:58210"/>
    </ligand>
</feature>
<sequence>MRYLTAGESHGPKLVGILEGVPSGAKIDKETIDQALQERQKGPGRGGRMKIEKDQVTILSGVRGGLTTGAPIALEIINRDWANWEKIMAWGDEADLESRKVITPRPGHADLTGHLKYRTEVRNVLERASARETAMRVAIGNIAVQILEALGVEIRGQVLSVGKVHMNSEDTPEYWQRVQASEWKVGDPQGEEALYTQLQEARSKGESLGGVLQIQVQNLLPGLGSYVQWDRKLDGRLAQAVLSVQAIKGVAFGMGFAAGQHFGSEVHDPIGYDSGRGYYRYSNNAGGIEGGMTNGEPVIIEAVMKPIPTLYSPLSTVNLETKEVMEASVERSDVCAVPAALVVLKHVAAWEILQAILEKFPADTWDELDKAWHDYKRFVSER</sequence>
<organism>
    <name type="scientific">Desulfitobacterium hafniense (strain Y51)</name>
    <dbReference type="NCBI Taxonomy" id="138119"/>
    <lineage>
        <taxon>Bacteria</taxon>
        <taxon>Bacillati</taxon>
        <taxon>Bacillota</taxon>
        <taxon>Clostridia</taxon>
        <taxon>Eubacteriales</taxon>
        <taxon>Desulfitobacteriaceae</taxon>
        <taxon>Desulfitobacterium</taxon>
    </lineage>
</organism>
<protein>
    <recommendedName>
        <fullName evidence="1">Chorismate synthase</fullName>
        <shortName evidence="1">CS</shortName>
        <ecNumber evidence="1">4.2.3.5</ecNumber>
    </recommendedName>
    <alternativeName>
        <fullName evidence="1">5-enolpyruvylshikimate-3-phosphate phospholyase</fullName>
    </alternativeName>
</protein>
<accession>Q24UW1</accession>
<evidence type="ECO:0000255" key="1">
    <source>
        <dbReference type="HAMAP-Rule" id="MF_00300"/>
    </source>
</evidence>
<comment type="function">
    <text evidence="1">Catalyzes the anti-1,4-elimination of the C-3 phosphate and the C-6 proR hydrogen from 5-enolpyruvylshikimate-3-phosphate (EPSP) to yield chorismate, which is the branch point compound that serves as the starting substrate for the three terminal pathways of aromatic amino acid biosynthesis. This reaction introduces a second double bond into the aromatic ring system.</text>
</comment>
<comment type="catalytic activity">
    <reaction evidence="1">
        <text>5-O-(1-carboxyvinyl)-3-phosphoshikimate = chorismate + phosphate</text>
        <dbReference type="Rhea" id="RHEA:21020"/>
        <dbReference type="ChEBI" id="CHEBI:29748"/>
        <dbReference type="ChEBI" id="CHEBI:43474"/>
        <dbReference type="ChEBI" id="CHEBI:57701"/>
        <dbReference type="EC" id="4.2.3.5"/>
    </reaction>
</comment>
<comment type="cofactor">
    <cofactor evidence="1">
        <name>FMNH2</name>
        <dbReference type="ChEBI" id="CHEBI:57618"/>
    </cofactor>
    <text evidence="1">Reduced FMN (FMNH(2)).</text>
</comment>
<comment type="pathway">
    <text evidence="1">Metabolic intermediate biosynthesis; chorismate biosynthesis; chorismate from D-erythrose 4-phosphate and phosphoenolpyruvate: step 7/7.</text>
</comment>
<comment type="subunit">
    <text evidence="1">Homotetramer.</text>
</comment>
<comment type="similarity">
    <text evidence="1">Belongs to the chorismate synthase family.</text>
</comment>
<proteinExistence type="inferred from homology"/>
<reference key="1">
    <citation type="journal article" date="2006" name="J. Bacteriol.">
        <title>Complete genome sequence of the dehalorespiring bacterium Desulfitobacterium hafniense Y51 and comparison with Dehalococcoides ethenogenes 195.</title>
        <authorList>
            <person name="Nonaka H."/>
            <person name="Keresztes G."/>
            <person name="Shinoda Y."/>
            <person name="Ikenaga Y."/>
            <person name="Abe M."/>
            <person name="Naito K."/>
            <person name="Inatomi K."/>
            <person name="Furukawa K."/>
            <person name="Inui M."/>
            <person name="Yukawa H."/>
        </authorList>
    </citation>
    <scope>NUCLEOTIDE SEQUENCE [LARGE SCALE GENOMIC DNA]</scope>
    <source>
        <strain>Y51</strain>
    </source>
</reference>
<name>AROC_DESHY</name>
<keyword id="KW-0028">Amino-acid biosynthesis</keyword>
<keyword id="KW-0057">Aromatic amino acid biosynthesis</keyword>
<keyword id="KW-0274">FAD</keyword>
<keyword id="KW-0285">Flavoprotein</keyword>
<keyword id="KW-0288">FMN</keyword>
<keyword id="KW-0456">Lyase</keyword>
<keyword id="KW-0521">NADP</keyword>
<keyword id="KW-1185">Reference proteome</keyword>